<evidence type="ECO:0000250" key="1">
    <source>
        <dbReference type="UniProtKB" id="P54493"/>
    </source>
</evidence>
<evidence type="ECO:0000255" key="2"/>
<evidence type="ECO:0000269" key="3">
    <source>
    </source>
</evidence>
<evidence type="ECO:0000269" key="4">
    <source>
    </source>
</evidence>
<evidence type="ECO:0000269" key="5">
    <source>
    </source>
</evidence>
<evidence type="ECO:0000303" key="6">
    <source>
    </source>
</evidence>
<evidence type="ECO:0000303" key="7">
    <source>
    </source>
</evidence>
<evidence type="ECO:0000305" key="8"/>
<evidence type="ECO:0000312" key="9">
    <source>
        <dbReference type="Araport" id="AT5G25752"/>
    </source>
</evidence>
<evidence type="ECO:0000312" key="10">
    <source>
        <dbReference type="EMBL" id="AAP21234.1"/>
    </source>
</evidence>
<gene>
    <name evidence="6" type="primary">RBL11</name>
    <name evidence="7" type="synonym">RBL9</name>
    <name evidence="9" type="ordered locus">At5g25752</name>
    <name evidence="8" type="ORF">T5I5</name>
</gene>
<organism evidence="10">
    <name type="scientific">Arabidopsis thaliana</name>
    <name type="common">Mouse-ear cress</name>
    <dbReference type="NCBI Taxonomy" id="3702"/>
    <lineage>
        <taxon>Eukaryota</taxon>
        <taxon>Viridiplantae</taxon>
        <taxon>Streptophyta</taxon>
        <taxon>Embryophyta</taxon>
        <taxon>Tracheophyta</taxon>
        <taxon>Spermatophyta</taxon>
        <taxon>Magnoliopsida</taxon>
        <taxon>eudicotyledons</taxon>
        <taxon>Gunneridae</taxon>
        <taxon>Pentapetalae</taxon>
        <taxon>rosids</taxon>
        <taxon>malvids</taxon>
        <taxon>Brassicales</taxon>
        <taxon>Brassicaceae</taxon>
        <taxon>Camelineae</taxon>
        <taxon>Arabidopsis</taxon>
    </lineage>
</organism>
<sequence length="280" mass="31593">MSQLLHLHRLSLPQSSLRFRFPPLHRRRAASSPTNSTQPPLQFRPLTVSRSQITCRFSQSDITPQFELDKAKDNRKPQKRANGIFWIILINLGIYLADHFFQVRGIKSLYLYHNFPAWYQFVTATFCHANWNHLSSNLFFLYIFGKLVEEEEGNFGLWLSYLFTGVGANLVSWLVLPRNAVSVGASGAVFGLFAISVLVKMSWDWRKILEVLILGQFVIERVMEAAQASAGLSGTIYGGYSLQTVNHIAHLSGALVGVVLVWLLSKFPSASMDQDVKKSS</sequence>
<proteinExistence type="evidence at protein level"/>
<keyword id="KW-0150">Chloroplast</keyword>
<keyword id="KW-0378">Hydrolase</keyword>
<keyword id="KW-0472">Membrane</keyword>
<keyword id="KW-0934">Plastid</keyword>
<keyword id="KW-1001">Plastid inner membrane</keyword>
<keyword id="KW-0645">Protease</keyword>
<keyword id="KW-1185">Reference proteome</keyword>
<keyword id="KW-0809">Transit peptide</keyword>
<keyword id="KW-0812">Transmembrane</keyword>
<keyword id="KW-1133">Transmembrane helix</keyword>
<feature type="transit peptide" description="Chloroplast" evidence="2">
    <location>
        <begin position="1"/>
        <end position="57"/>
    </location>
</feature>
<feature type="chain" id="PRO_0000433332" description="Rhomboid-like protein 11, chloroplastic" evidence="2">
    <location>
        <begin position="58"/>
        <end position="280"/>
    </location>
</feature>
<feature type="topological domain" description="Stromal" evidence="8">
    <location>
        <begin position="58"/>
        <end position="82"/>
    </location>
</feature>
<feature type="transmembrane region" description="Helical" evidence="2">
    <location>
        <begin position="83"/>
        <end position="103"/>
    </location>
</feature>
<feature type="topological domain" description="Chloroplast intermembrane" evidence="8">
    <location>
        <begin position="104"/>
        <end position="117"/>
    </location>
</feature>
<feature type="transmembrane region" description="Helical" evidence="2">
    <location>
        <begin position="118"/>
        <end position="140"/>
    </location>
</feature>
<feature type="topological domain" description="Stromal" evidence="8">
    <location>
        <begin position="141"/>
        <end position="154"/>
    </location>
</feature>
<feature type="transmembrane region" description="Helical" evidence="2">
    <location>
        <begin position="155"/>
        <end position="175"/>
    </location>
</feature>
<feature type="topological domain" description="Chloroplast intermembrane" evidence="8">
    <location>
        <begin position="176"/>
        <end position="178"/>
    </location>
</feature>
<feature type="transmembrane region" description="Helical" evidence="2">
    <location>
        <begin position="179"/>
        <end position="199"/>
    </location>
</feature>
<feature type="topological domain" description="Stromal" evidence="8">
    <location>
        <begin position="200"/>
        <end position="243"/>
    </location>
</feature>
<feature type="transmembrane region" description="Helical" evidence="2">
    <location>
        <begin position="244"/>
        <end position="264"/>
    </location>
</feature>
<feature type="topological domain" description="Chloroplast intermembrane" evidence="8">
    <location>
        <begin position="265"/>
        <end position="280"/>
    </location>
</feature>
<feature type="active site" description="Nucleophile" evidence="1">
    <location>
        <position position="186"/>
    </location>
</feature>
<feature type="active site" description="Charge relay system" evidence="1">
    <location>
        <position position="250"/>
    </location>
</feature>
<name>RBL11_ARATH</name>
<reference key="1">
    <citation type="journal article" date="2000" name="Nature">
        <title>Sequence and analysis of chromosome 5 of the plant Arabidopsis thaliana.</title>
        <authorList>
            <person name="Tabata S."/>
            <person name="Kaneko T."/>
            <person name="Nakamura Y."/>
            <person name="Kotani H."/>
            <person name="Kato T."/>
            <person name="Asamizu E."/>
            <person name="Miyajima N."/>
            <person name="Sasamoto S."/>
            <person name="Kimura T."/>
            <person name="Hosouchi T."/>
            <person name="Kawashima K."/>
            <person name="Kohara M."/>
            <person name="Matsumoto M."/>
            <person name="Matsuno A."/>
            <person name="Muraki A."/>
            <person name="Nakayama S."/>
            <person name="Nakazaki N."/>
            <person name="Naruo K."/>
            <person name="Okumura S."/>
            <person name="Shinpo S."/>
            <person name="Takeuchi C."/>
            <person name="Wada T."/>
            <person name="Watanabe A."/>
            <person name="Yamada M."/>
            <person name="Yasuda M."/>
            <person name="Sato S."/>
            <person name="de la Bastide M."/>
            <person name="Huang E."/>
            <person name="Spiegel L."/>
            <person name="Gnoj L."/>
            <person name="O'Shaughnessy A."/>
            <person name="Preston R."/>
            <person name="Habermann K."/>
            <person name="Murray J."/>
            <person name="Johnson D."/>
            <person name="Rohlfing T."/>
            <person name="Nelson J."/>
            <person name="Stoneking T."/>
            <person name="Pepin K."/>
            <person name="Spieth J."/>
            <person name="Sekhon M."/>
            <person name="Armstrong J."/>
            <person name="Becker M."/>
            <person name="Belter E."/>
            <person name="Cordum H."/>
            <person name="Cordes M."/>
            <person name="Courtney L."/>
            <person name="Courtney W."/>
            <person name="Dante M."/>
            <person name="Du H."/>
            <person name="Edwards J."/>
            <person name="Fryman J."/>
            <person name="Haakensen B."/>
            <person name="Lamar E."/>
            <person name="Latreille P."/>
            <person name="Leonard S."/>
            <person name="Meyer R."/>
            <person name="Mulvaney E."/>
            <person name="Ozersky P."/>
            <person name="Riley A."/>
            <person name="Strowmatt C."/>
            <person name="Wagner-McPherson C."/>
            <person name="Wollam A."/>
            <person name="Yoakum M."/>
            <person name="Bell M."/>
            <person name="Dedhia N."/>
            <person name="Parnell L."/>
            <person name="Shah R."/>
            <person name="Rodriguez M."/>
            <person name="Hoon See L."/>
            <person name="Vil D."/>
            <person name="Baker J."/>
            <person name="Kirchoff K."/>
            <person name="Toth K."/>
            <person name="King L."/>
            <person name="Bahret A."/>
            <person name="Miller B."/>
            <person name="Marra M.A."/>
            <person name="Martienssen R."/>
            <person name="McCombie W.R."/>
            <person name="Wilson R.K."/>
            <person name="Murphy G."/>
            <person name="Bancroft I."/>
            <person name="Volckaert G."/>
            <person name="Wambutt R."/>
            <person name="Duesterhoeft A."/>
            <person name="Stiekema W."/>
            <person name="Pohl T."/>
            <person name="Entian K.-D."/>
            <person name="Terryn N."/>
            <person name="Hartley N."/>
            <person name="Bent E."/>
            <person name="Johnson S."/>
            <person name="Langham S.-A."/>
            <person name="McCullagh B."/>
            <person name="Robben J."/>
            <person name="Grymonprez B."/>
            <person name="Zimmermann W."/>
            <person name="Ramsperger U."/>
            <person name="Wedler H."/>
            <person name="Balke K."/>
            <person name="Wedler E."/>
            <person name="Peters S."/>
            <person name="van Staveren M."/>
            <person name="Dirkse W."/>
            <person name="Mooijman P."/>
            <person name="Klein Lankhorst R."/>
            <person name="Weitzenegger T."/>
            <person name="Bothe G."/>
            <person name="Rose M."/>
            <person name="Hauf J."/>
            <person name="Berneiser S."/>
            <person name="Hempel S."/>
            <person name="Feldpausch M."/>
            <person name="Lamberth S."/>
            <person name="Villarroel R."/>
            <person name="Gielen J."/>
            <person name="Ardiles W."/>
            <person name="Bents O."/>
            <person name="Lemcke K."/>
            <person name="Kolesov G."/>
            <person name="Mayer K.F.X."/>
            <person name="Rudd S."/>
            <person name="Schoof H."/>
            <person name="Schueller C."/>
            <person name="Zaccaria P."/>
            <person name="Mewes H.-W."/>
            <person name="Bevan M."/>
            <person name="Fransz P.F."/>
        </authorList>
    </citation>
    <scope>NUCLEOTIDE SEQUENCE [LARGE SCALE GENOMIC DNA]</scope>
    <source>
        <strain>cv. Columbia</strain>
    </source>
</reference>
<reference key="2">
    <citation type="journal article" date="2017" name="Plant J.">
        <title>Araport11: a complete reannotation of the Arabidopsis thaliana reference genome.</title>
        <authorList>
            <person name="Cheng C.Y."/>
            <person name="Krishnakumar V."/>
            <person name="Chan A.P."/>
            <person name="Thibaud-Nissen F."/>
            <person name="Schobel S."/>
            <person name="Town C.D."/>
        </authorList>
    </citation>
    <scope>GENOME REANNOTATION</scope>
    <source>
        <strain>cv. Columbia</strain>
    </source>
</reference>
<reference key="3">
    <citation type="journal article" date="2003" name="Science">
        <title>Empirical analysis of transcriptional activity in the Arabidopsis genome.</title>
        <authorList>
            <person name="Yamada K."/>
            <person name="Lim J."/>
            <person name="Dale J.M."/>
            <person name="Chen H."/>
            <person name="Shinn P."/>
            <person name="Palm C.J."/>
            <person name="Southwick A.M."/>
            <person name="Wu H.C."/>
            <person name="Kim C.J."/>
            <person name="Nguyen M."/>
            <person name="Pham P.K."/>
            <person name="Cheuk R.F."/>
            <person name="Karlin-Newmann G."/>
            <person name="Liu S.X."/>
            <person name="Lam B."/>
            <person name="Sakano H."/>
            <person name="Wu T."/>
            <person name="Yu G."/>
            <person name="Miranda M."/>
            <person name="Quach H.L."/>
            <person name="Tripp M."/>
            <person name="Chang C.H."/>
            <person name="Lee J.M."/>
            <person name="Toriumi M.J."/>
            <person name="Chan M.M."/>
            <person name="Tang C.C."/>
            <person name="Onodera C.S."/>
            <person name="Deng J.M."/>
            <person name="Akiyama K."/>
            <person name="Ansari Y."/>
            <person name="Arakawa T."/>
            <person name="Banh J."/>
            <person name="Banno F."/>
            <person name="Bowser L."/>
            <person name="Brooks S.Y."/>
            <person name="Carninci P."/>
            <person name="Chao Q."/>
            <person name="Choy N."/>
            <person name="Enju A."/>
            <person name="Goldsmith A.D."/>
            <person name="Gurjal M."/>
            <person name="Hansen N.F."/>
            <person name="Hayashizaki Y."/>
            <person name="Johnson-Hopson C."/>
            <person name="Hsuan V.W."/>
            <person name="Iida K."/>
            <person name="Karnes M."/>
            <person name="Khan S."/>
            <person name="Koesema E."/>
            <person name="Ishida J."/>
            <person name="Jiang P.X."/>
            <person name="Jones T."/>
            <person name="Kawai J."/>
            <person name="Kamiya A."/>
            <person name="Meyers C."/>
            <person name="Nakajima M."/>
            <person name="Narusaka M."/>
            <person name="Seki M."/>
            <person name="Sakurai T."/>
            <person name="Satou M."/>
            <person name="Tamse R."/>
            <person name="Vaysberg M."/>
            <person name="Wallender E.K."/>
            <person name="Wong C."/>
            <person name="Yamamura Y."/>
            <person name="Yuan S."/>
            <person name="Shinozaki K."/>
            <person name="Davis R.W."/>
            <person name="Theologis A."/>
            <person name="Ecker J.R."/>
        </authorList>
    </citation>
    <scope>NUCLEOTIDE SEQUENCE [LARGE SCALE MRNA]</scope>
    <source>
        <strain>cv. Columbia</strain>
    </source>
</reference>
<reference key="4">
    <citation type="submission" date="2006-07" db="EMBL/GenBank/DDBJ databases">
        <title>Large-scale analysis of RIKEN Arabidopsis full-length (RAFL) cDNAs.</title>
        <authorList>
            <person name="Totoki Y."/>
            <person name="Seki M."/>
            <person name="Ishida J."/>
            <person name="Nakajima M."/>
            <person name="Enju A."/>
            <person name="Kamiya A."/>
            <person name="Narusaka M."/>
            <person name="Shin-i T."/>
            <person name="Nakagawa M."/>
            <person name="Sakamoto N."/>
            <person name="Oishi K."/>
            <person name="Kohara Y."/>
            <person name="Kobayashi M."/>
            <person name="Toyoda A."/>
            <person name="Sakaki Y."/>
            <person name="Sakurai T."/>
            <person name="Iida K."/>
            <person name="Akiyama K."/>
            <person name="Satou M."/>
            <person name="Toyoda T."/>
            <person name="Konagaya A."/>
            <person name="Carninci P."/>
            <person name="Kawai J."/>
            <person name="Hayashizaki Y."/>
            <person name="Shinozaki K."/>
        </authorList>
    </citation>
    <scope>NUCLEOTIDE SEQUENCE [LARGE SCALE MRNA]</scope>
    <source>
        <strain>cv. Columbia</strain>
    </source>
</reference>
<reference key="5">
    <citation type="journal article" date="2006" name="BMC Genomics">
        <title>Cross genome comparisons of serine proteases in Arabidopsis and rice.</title>
        <authorList>
            <person name="Tripathi L.P."/>
            <person name="Sowdhamini R."/>
        </authorList>
    </citation>
    <scope>GENE FAMILY</scope>
    <scope>NOMENCLATURE</scope>
</reference>
<reference key="6">
    <citation type="journal article" date="2006" name="BMC Plant Biol.">
        <title>Protease gene families in Populus and Arabidopsis.</title>
        <authorList>
            <person name="Garcia-Lorenzo M."/>
            <person name="Sjodin A."/>
            <person name="Jansson S."/>
            <person name="Funk C."/>
        </authorList>
    </citation>
    <scope>GENE FAMILY</scope>
    <scope>NOMENCLATURE</scope>
</reference>
<reference key="7">
    <citation type="journal article" date="2007" name="Genome Res.">
        <title>Functional and evolutionary implications of enhanced genomic analysis of rhomboid intramembrane proteases.</title>
        <authorList>
            <person name="Lemberg M.K."/>
            <person name="Freeman M."/>
        </authorList>
    </citation>
    <scope>GENE FAMILY</scope>
    <scope>NOMENCLATURE</scope>
</reference>
<reference key="8">
    <citation type="journal article" date="2008" name="Plant Mol. Biol.">
        <title>Plant mitochondrial rhomboid, AtRBL12, has different substrate specificity from its yeast counterpart.</title>
        <authorList>
            <person name="Kmiec-Wisniewska B."/>
            <person name="Krumpe K."/>
            <person name="Urantowka A."/>
            <person name="Sakamoto W."/>
            <person name="Pratje E."/>
            <person name="Janska H."/>
        </authorList>
    </citation>
    <scope>SUBCELLULAR LOCATION</scope>
</reference>
<reference key="9">
    <citation type="journal article" date="2012" name="Plant J.">
        <title>Rhomboid proteins in the chloroplast envelope affect the level of allene oxide synthase in Arabidopsis thaliana.</title>
        <authorList>
            <person name="Knopf R.R."/>
            <person name="Feder A."/>
            <person name="Mayer K."/>
            <person name="Lin A."/>
            <person name="Rozenberg M."/>
            <person name="Schaller A."/>
            <person name="Adam Z."/>
        </authorList>
    </citation>
    <scope>FUNCTION</scope>
    <scope>SUBCELLULAR LOCATION</scope>
    <scope>TOPOLOGY</scope>
    <scope>SUBUNIT</scope>
    <scope>DISRUPTION PHENOTYPE</scope>
</reference>
<reference key="10">
    <citation type="journal article" date="2012" name="Physiol. Plantarum">
        <title>Rhomboid proteases in plants - still in square one?</title>
        <authorList>
            <person name="Knopf R.R."/>
            <person name="Adam Z."/>
        </authorList>
    </citation>
    <scope>REVIEW</scope>
</reference>
<dbReference type="EC" id="3.4.21.-" evidence="8"/>
<dbReference type="EMBL" id="AC006601">
    <property type="status" value="NOT_ANNOTATED_CDS"/>
    <property type="molecule type" value="Genomic_DNA"/>
</dbReference>
<dbReference type="EMBL" id="CP002688">
    <property type="status" value="NOT_ANNOTATED_CDS"/>
    <property type="molecule type" value="Genomic_DNA"/>
</dbReference>
<dbReference type="EMBL" id="BT006426">
    <property type="protein sequence ID" value="AAP21234.1"/>
    <property type="molecule type" value="mRNA"/>
</dbReference>
<dbReference type="EMBL" id="AK228048">
    <property type="protein sequence ID" value="BAF00010.1"/>
    <property type="molecule type" value="mRNA"/>
</dbReference>
<dbReference type="SMR" id="Q84MB5"/>
<dbReference type="IntAct" id="Q84MB5">
    <property type="interactions" value="116"/>
</dbReference>
<dbReference type="STRING" id="3702.Q84MB5"/>
<dbReference type="MEROPS" id="S54.025"/>
<dbReference type="PaxDb" id="3702-AT5G25752.1"/>
<dbReference type="Araport" id="AT5G25752"/>
<dbReference type="TAIR" id="AT5G25752"/>
<dbReference type="eggNOG" id="ENOG502QTDP">
    <property type="taxonomic scope" value="Eukaryota"/>
</dbReference>
<dbReference type="HOGENOM" id="CLU_055068_0_1_1"/>
<dbReference type="InParanoid" id="Q84MB5"/>
<dbReference type="PhylomeDB" id="Q84MB5"/>
<dbReference type="PRO" id="PR:Q84MB5"/>
<dbReference type="Proteomes" id="UP000006548">
    <property type="component" value="Chromosome 5"/>
</dbReference>
<dbReference type="ExpressionAtlas" id="Q84MB5">
    <property type="expression patterns" value="baseline and differential"/>
</dbReference>
<dbReference type="GO" id="GO:0009507">
    <property type="term" value="C:chloroplast"/>
    <property type="evidence" value="ECO:0000314"/>
    <property type="project" value="TAIR"/>
</dbReference>
<dbReference type="GO" id="GO:0009706">
    <property type="term" value="C:chloroplast inner membrane"/>
    <property type="evidence" value="ECO:0000314"/>
    <property type="project" value="TAIR"/>
</dbReference>
<dbReference type="GO" id="GO:0019904">
    <property type="term" value="F:protein domain specific binding"/>
    <property type="evidence" value="ECO:0000353"/>
    <property type="project" value="CAFA"/>
</dbReference>
<dbReference type="GO" id="GO:0004252">
    <property type="term" value="F:serine-type endopeptidase activity"/>
    <property type="evidence" value="ECO:0007669"/>
    <property type="project" value="InterPro"/>
</dbReference>
<dbReference type="GO" id="GO:0006508">
    <property type="term" value="P:proteolysis"/>
    <property type="evidence" value="ECO:0007669"/>
    <property type="project" value="UniProtKB-KW"/>
</dbReference>
<dbReference type="GO" id="GO:0080140">
    <property type="term" value="P:regulation of jasmonic acid metabolic process"/>
    <property type="evidence" value="ECO:0000315"/>
    <property type="project" value="TAIR"/>
</dbReference>
<dbReference type="FunFam" id="1.20.1540.10:FF:000013">
    <property type="entry name" value="Rhomboid protease aarA"/>
    <property type="match status" value="1"/>
</dbReference>
<dbReference type="Gene3D" id="1.20.1540.10">
    <property type="entry name" value="Rhomboid-like"/>
    <property type="match status" value="1"/>
</dbReference>
<dbReference type="InterPro" id="IPR022764">
    <property type="entry name" value="Peptidase_S54_rhomboid_dom"/>
</dbReference>
<dbReference type="InterPro" id="IPR035952">
    <property type="entry name" value="Rhomboid-like_sf"/>
</dbReference>
<dbReference type="PANTHER" id="PTHR43066:SF5">
    <property type="entry name" value="RHOMBOID-LIKE PROTEIN 11, CHLOROPLASTIC-RELATED"/>
    <property type="match status" value="1"/>
</dbReference>
<dbReference type="PANTHER" id="PTHR43066">
    <property type="entry name" value="RHOMBOID-RELATED PROTEIN"/>
    <property type="match status" value="1"/>
</dbReference>
<dbReference type="Pfam" id="PF01694">
    <property type="entry name" value="Rhomboid"/>
    <property type="match status" value="1"/>
</dbReference>
<dbReference type="SUPFAM" id="SSF144091">
    <property type="entry name" value="Rhomboid-like"/>
    <property type="match status" value="1"/>
</dbReference>
<protein>
    <recommendedName>
        <fullName evidence="6">Rhomboid-like protein 11, chloroplastic</fullName>
        <shortName evidence="6">AtRBL11</shortName>
        <ecNumber evidence="8">3.4.21.-</ecNumber>
    </recommendedName>
</protein>
<accession>Q84MB5</accession>
<comment type="function">
    <text evidence="5">Rhomboid-type serine protease that catalyzes intramembrane proteolysis. May be involved in TIC22 processing during its import.</text>
</comment>
<comment type="subunit">
    <text evidence="3">Homooligomer.</text>
</comment>
<comment type="subcellular location">
    <subcellularLocation>
        <location evidence="4 5">Plastid</location>
        <location evidence="4 5">Chloroplast inner membrane</location>
        <topology evidence="2">Multi-pass membrane protein</topology>
    </subcellularLocation>
</comment>
<comment type="disruption phenotype">
    <text evidence="5">No visible phenotype. Rbl10 and rbl11 double mutants have no visible phenotype.</text>
</comment>
<comment type="similarity">
    <text evidence="8">Belongs to the peptidase S54 family.</text>
</comment>
<comment type="caution">
    <text evidence="5">Both termini are shown to be facing the stroma and hence a sixth transmembrane domain should be present.</text>
</comment>